<evidence type="ECO:0000255" key="1"/>
<evidence type="ECO:0000269" key="2">
    <source>
    </source>
</evidence>
<evidence type="ECO:0000269" key="3">
    <source>
    </source>
</evidence>
<evidence type="ECO:0000303" key="4">
    <source>
    </source>
</evidence>
<evidence type="ECO:0000305" key="5">
    <source>
    </source>
</evidence>
<evidence type="ECO:0000305" key="6">
    <source>
    </source>
</evidence>
<sequence>MSNSIEAKLQEDLRDALVDYYLGQIVPNSKDFTNLRSTIKNVDDLYDHLLLDTQVSAKVITSRLSLVTQSVQQYINRIALNLEPGLSINQQEATDWEEFANRYGYWAANQQLRMFPEIYVDPTLRLTKTEFFFQLESALNQGKLTDDVAQKAVLGYLNNFEEVSNLEIIAGYQDGIDIENDKTYFVARTRMQPYRYFWRSLDASQRNANSQELYPTAWSEWKAISVPLENVANGIVRPIMMDNRLYISWFEVAEEKETDSDGNIIVSGRYRTKIRLAHLGFDGVWSSGTTLREEVLADQMEEMIAVVDRMEDEPRLALVAFKEMSESWDVVFSYICDSMLIESSNLPTTTHPPKPGDGDKGLSDLDDYGANLVWFYLHETANGGKAEYKQLILYPVIINRDWPIELDKTHQGDFGTVDDFTLNSNYTGDELSLYLQSSSTYKYDFSKSKNIIYGIWKEDANNNRCWLNYKLLTPEDYEPQINATLVMCDKGDVNIITGFSLPNGGVDAGGKIKVTLRVGKKLRDKFQIKQFSQTQYLQFPEASSADVWYIGKQIRLNTLFAKELIGKASRSLDLVLSWETQNSRLEEAILGGAAELIDLDGANGIYFWELFFHMPFMVSWRFNVEQRYEDANRWVKYLFNPFECEDEPALLLGKPPYWNSRPLVDEPFKGYSLTQPSDPDAIAASDPIHYRKAVFNFLTKNIIDQGDMEYRKLQPSARTLARLSYSTASSLLGRRPDVQLTSFWQPLTLEDASYKTDSEIRAIEMQSQPLTFEPVVHDQTMSAVDNDIFMYPMNNELRGLWDRIENRIYNLRHNLTLDGKEINMDLYDSSISPRGLMKQRYQRVVTARNASKMNFKVPNYRFEPMLNRSKSGVETLIQFGSTLLSLLERKDSLSFDAYQMIQSGDLYRFSIDLQQQDIDINKASLEALQVSKQSAQDRYDHFKELYDENISSTEQKVIELQSQAANSLLMAQGMRTAAAALDVIPNIYGLAVGGSHWGAPLNAAAEIIMIKYQADSSKSESLSVSESYRRRRQEWELQYKQAEWEVNSVEQQINLQNMQIKAANKRLEQVEAQQQQAMALLDYFSERFTNESLYTWLISQLSSLYLQAYDAVLSLCLSAEASLLYELNLGEQSFVGGGGWNDLYQGLMAGETLKLALMRMERVYVEQNSRRQEITKTISLKALLGESWPAELNKLKQKTPINFNLEEQIFVEDYQELYQRRIKSVSVSLPMLVGPYEDVCAQLTQTSSSYSTRADLKTVENMLTKRTFADTPHLVRSIQPNQQISLSTGVNDSGLFMLNFDDERFLPFEGSGVDSSWRLQFTNLKQNLDSLNDVILHVKYTAAIGSSTFSQGVRKILANINNDE</sequence>
<keyword id="KW-0002">3D-structure</keyword>
<keyword id="KW-0175">Coiled coil</keyword>
<keyword id="KW-0903">Direct protein sequencing</keyword>
<keyword id="KW-0964">Secreted</keyword>
<keyword id="KW-0843">Virulence</keyword>
<organism>
    <name type="scientific">Yersinia entomophaga</name>
    <dbReference type="NCBI Taxonomy" id="935293"/>
    <lineage>
        <taxon>Bacteria</taxon>
        <taxon>Pseudomonadati</taxon>
        <taxon>Pseudomonadota</taxon>
        <taxon>Gammaproteobacteria</taxon>
        <taxon>Enterobacterales</taxon>
        <taxon>Yersiniaceae</taxon>
        <taxon>Yersinia</taxon>
    </lineage>
</organism>
<feature type="initiator methionine" description="Removed" evidence="2">
    <location>
        <position position="1"/>
    </location>
</feature>
<feature type="chain" id="PRO_0000445772" description="Toxin subunit YenA2">
    <location>
        <begin position="2"/>
        <end position="1364"/>
    </location>
</feature>
<feature type="coiled-coil region" evidence="1">
    <location>
        <begin position="1025"/>
        <end position="1080"/>
    </location>
</feature>
<accession>B6A878</accession>
<comment type="function">
    <text evidence="2 3 6">Part of an orally active toxin complex (TC) with strong insecticidal effects on larvae of the Coleoptera Costelytra zealandica, Acrossidius tasmania and Adoryphorus couloni and some Lepidoptera larvae (PubMed:21278295, PubMed:22158901). The TC has an endochitinase activity (Probable) (PubMed:21278295).</text>
</comment>
<comment type="subunit">
    <text evidence="2 3">Semipurified toxin complex consists of at least YenA1-YenA2-YenB-YenC1-YenC2-Chi1-Chi2 (PubMed:21278295). The Yen-TC:K9 subcomplex is about 26 nm tall and 22 nm in diameter with 5-fold symmetry and 5 copies of YenA1, YenA2, Chi1 and Chi2; the chitinase subunits may be solvent accessible on the exterior the complex (PubMed:22158901). The Yen-TC:K9 subcomplex has no insecticidal activity (PubMed:22158901). The native complex with additional YenB, YenC1 and YenC2 subunits is 16 nm taller and is insecticidal; the toxicity-conferring subunits are present at about 1 copy each (PubMed:22158901).</text>
</comment>
<comment type="subcellular location">
    <subcellularLocation>
        <location evidence="2">Secreted</location>
    </subcellularLocation>
    <text evidence="2">Secreted when grown at 25 degrees Celsius or less, but not when grown at 30 or 37 degrees Celsius.</text>
</comment>
<comment type="PTM">
    <text evidence="5">The isolated toxin complex includes 3 peptides starting between residues 768 and 778 of this protein, which might be physiologically relevant.</text>
</comment>
<comment type="disruption phenotype">
    <text evidence="2">Cells with a disrupted yenA1-yenA2-chi2-yenB-yenC1-yenC2 locus are no longer pathogenic in C.zealandica larvae.</text>
</comment>
<name>YENA2_YERET</name>
<protein>
    <recommendedName>
        <fullName evidence="4">Toxin subunit YenA2</fullName>
    </recommendedName>
</protein>
<reference key="1">
    <citation type="journal article" date="2011" name="J. Bacteriol.">
        <title>The main virulence determinant of Yersinia entomophaga MH96 is a broad-host-range toxin complex active against insects.</title>
        <authorList>
            <person name="Hurst M.R."/>
            <person name="Jones S.A."/>
            <person name="Binglin T."/>
            <person name="Harper L.A."/>
            <person name="Jackson T.A."/>
            <person name="Glare T.R."/>
        </authorList>
    </citation>
    <scope>NUCLEOTIDE SEQUENCE [GENOMIC DNA]</scope>
    <scope>PROTEIN SEQUENCE OF 2-10 AND 768-786</scope>
    <scope>IDENTIFICATION BY MASS SPECTROMETRY</scope>
    <scope>FUNCTION</scope>
    <scope>ACTIVITY REGULATION</scope>
    <scope>SUBUNIT</scope>
    <scope>SUBCELLULAR LOCATION</scope>
    <scope>CLEAVAGE</scope>
    <scope>DISRUPTION PHENOTYPE</scope>
    <source>
        <strain>ATCC BAA-1678 / DSM 22339 / MH96</strain>
    </source>
</reference>
<reference key="2">
    <citation type="journal article" date="2011" name="Proc. Natl. Acad. Sci. U.S.A.">
        <title>3D structure of the Yersinia entomophaga toxin complex and implications for insecticidal activity.</title>
        <authorList>
            <person name="Landsberg M.J."/>
            <person name="Jones S.A."/>
            <person name="Rothnagel R."/>
            <person name="Busby J.N."/>
            <person name="Marshall S.D."/>
            <person name="Simpson R.M."/>
            <person name="Lott J.S."/>
            <person name="Hankamer B."/>
            <person name="Hurst M.R."/>
        </authorList>
    </citation>
    <scope>ELECTRON MICROSCOPY (17.0 ANGSTROMS) OF YEN-TC:K9 COMPLEX</scope>
    <scope>FUNCTION</scope>
    <scope>SUBUNIT</scope>
    <source>
        <strain>ATCC BAA-1678 / DSM 22339 / MH96</strain>
    </source>
</reference>
<dbReference type="EMBL" id="DQ400808">
    <property type="protein sequence ID" value="ABG33868.1"/>
    <property type="molecule type" value="Genomic_DNA"/>
</dbReference>
<dbReference type="RefSeq" id="WP_064513227.1">
    <property type="nucleotide sequence ID" value="NZ_MWTM01000006.1"/>
</dbReference>
<dbReference type="PDB" id="6OGD">
    <property type="method" value="EM"/>
    <property type="resolution" value="4.40 A"/>
    <property type="chains" value="B/E/H/K/N=1-1364"/>
</dbReference>
<dbReference type="PDBsum" id="6OGD"/>
<dbReference type="EMDB" id="EMD-20053"/>
<dbReference type="EMDB" id="EMD-20054"/>
<dbReference type="SMR" id="B6A878"/>
<dbReference type="DIP" id="DIP-60374N"/>
<dbReference type="IntAct" id="B6A878">
    <property type="interactions" value="1"/>
</dbReference>
<dbReference type="STRING" id="935293.PL78_03750"/>
<dbReference type="KEGG" id="yeg:PL78_03750"/>
<dbReference type="PATRIC" id="fig|935293.3.peg.807"/>
<dbReference type="OrthoDB" id="9781691at2"/>
<dbReference type="GO" id="GO:0005576">
    <property type="term" value="C:extracellular region"/>
    <property type="evidence" value="ECO:0007669"/>
    <property type="project" value="UniProtKB-SubCell"/>
</dbReference>
<dbReference type="InterPro" id="IPR046839">
    <property type="entry name" value="ABC_toxin_N"/>
</dbReference>
<dbReference type="InterPro" id="IPR041079">
    <property type="entry name" value="Neuraminidase-like"/>
</dbReference>
<dbReference type="InterPro" id="IPR040840">
    <property type="entry name" value="TcA_TcB_BD"/>
</dbReference>
<dbReference type="Pfam" id="PF20220">
    <property type="entry name" value="ABC_toxin_N"/>
    <property type="match status" value="1"/>
</dbReference>
<dbReference type="Pfam" id="PF18413">
    <property type="entry name" value="Neuraminidase"/>
    <property type="match status" value="1"/>
</dbReference>
<dbReference type="Pfam" id="PF18276">
    <property type="entry name" value="TcA_TcB_BD"/>
    <property type="match status" value="1"/>
</dbReference>
<gene>
    <name evidence="4" type="primary">yenA2</name>
</gene>
<proteinExistence type="evidence at protein level"/>